<protein>
    <recommendedName>
        <fullName evidence="1">D-alanyl carrier protein</fullName>
        <shortName evidence="1">DCP</shortName>
    </recommendedName>
    <alternativeName>
        <fullName evidence="1">D-alanine--poly(phosphoribitol) ligase subunit 2</fullName>
    </alternativeName>
</protein>
<accession>B8DEG4</accession>
<dbReference type="EMBL" id="CP001175">
    <property type="protein sequence ID" value="ACK39993.1"/>
    <property type="molecule type" value="Genomic_DNA"/>
</dbReference>
<dbReference type="RefSeq" id="WP_003729846.1">
    <property type="nucleotide sequence ID" value="NC_011660.1"/>
</dbReference>
<dbReference type="SMR" id="B8DEG4"/>
<dbReference type="KEGG" id="lmh:LMHCC_1651"/>
<dbReference type="HOGENOM" id="CLU_108696_19_0_9"/>
<dbReference type="UniPathway" id="UPA00556"/>
<dbReference type="GO" id="GO:0005737">
    <property type="term" value="C:cytoplasm"/>
    <property type="evidence" value="ECO:0007669"/>
    <property type="project" value="UniProtKB-SubCell"/>
</dbReference>
<dbReference type="GO" id="GO:0036370">
    <property type="term" value="F:D-alanyl carrier activity"/>
    <property type="evidence" value="ECO:0007669"/>
    <property type="project" value="UniProtKB-UniRule"/>
</dbReference>
<dbReference type="GO" id="GO:0071555">
    <property type="term" value="P:cell wall organization"/>
    <property type="evidence" value="ECO:0007669"/>
    <property type="project" value="UniProtKB-KW"/>
</dbReference>
<dbReference type="GO" id="GO:0070395">
    <property type="term" value="P:lipoteichoic acid biosynthetic process"/>
    <property type="evidence" value="ECO:0007669"/>
    <property type="project" value="UniProtKB-UniRule"/>
</dbReference>
<dbReference type="FunFam" id="1.10.1200.10:FF:000004">
    <property type="entry name" value="D-alanyl carrier protein"/>
    <property type="match status" value="1"/>
</dbReference>
<dbReference type="Gene3D" id="1.10.1200.10">
    <property type="entry name" value="ACP-like"/>
    <property type="match status" value="1"/>
</dbReference>
<dbReference type="HAMAP" id="MF_00565">
    <property type="entry name" value="DltC"/>
    <property type="match status" value="1"/>
</dbReference>
<dbReference type="InterPro" id="IPR036736">
    <property type="entry name" value="ACP-like_sf"/>
</dbReference>
<dbReference type="InterPro" id="IPR003230">
    <property type="entry name" value="DltC"/>
</dbReference>
<dbReference type="InterPro" id="IPR009081">
    <property type="entry name" value="PP-bd_ACP"/>
</dbReference>
<dbReference type="NCBIfam" id="TIGR01688">
    <property type="entry name" value="dltC"/>
    <property type="match status" value="1"/>
</dbReference>
<dbReference type="NCBIfam" id="NF003464">
    <property type="entry name" value="PRK05087.1"/>
    <property type="match status" value="1"/>
</dbReference>
<dbReference type="Pfam" id="PF00550">
    <property type="entry name" value="PP-binding"/>
    <property type="match status" value="1"/>
</dbReference>
<dbReference type="SUPFAM" id="SSF47336">
    <property type="entry name" value="ACP-like"/>
    <property type="match status" value="1"/>
</dbReference>
<dbReference type="PROSITE" id="PS50075">
    <property type="entry name" value="CARRIER"/>
    <property type="match status" value="1"/>
</dbReference>
<reference key="1">
    <citation type="journal article" date="2011" name="J. Bacteriol.">
        <title>Genome sequence of lineage III Listeria monocytogenes strain HCC23.</title>
        <authorList>
            <person name="Steele C.L."/>
            <person name="Donaldson J.R."/>
            <person name="Paul D."/>
            <person name="Banes M.M."/>
            <person name="Arick T."/>
            <person name="Bridges S.M."/>
            <person name="Lawrence M.L."/>
        </authorList>
    </citation>
    <scope>NUCLEOTIDE SEQUENCE [LARGE SCALE GENOMIC DNA]</scope>
    <source>
        <strain>HCC23</strain>
    </source>
</reference>
<gene>
    <name evidence="1" type="primary">dltC</name>
    <name type="ordered locus">LMHCC_1651</name>
</gene>
<feature type="chain" id="PRO_1000146794" description="D-alanyl carrier protein">
    <location>
        <begin position="1"/>
        <end position="78"/>
    </location>
</feature>
<feature type="domain" description="Carrier" evidence="1">
    <location>
        <begin position="1"/>
        <end position="78"/>
    </location>
</feature>
<feature type="modified residue" description="O-(pantetheine 4'-phosphoryl)serine" evidence="1">
    <location>
        <position position="36"/>
    </location>
</feature>
<name>DLTC_LISMH</name>
<proteinExistence type="inferred from homology"/>
<keyword id="KW-0961">Cell wall biogenesis/degradation</keyword>
<keyword id="KW-0963">Cytoplasm</keyword>
<keyword id="KW-0596">Phosphopantetheine</keyword>
<keyword id="KW-0597">Phosphoprotein</keyword>
<organism>
    <name type="scientific">Listeria monocytogenes serotype 4a (strain HCC23)</name>
    <dbReference type="NCBI Taxonomy" id="552536"/>
    <lineage>
        <taxon>Bacteria</taxon>
        <taxon>Bacillati</taxon>
        <taxon>Bacillota</taxon>
        <taxon>Bacilli</taxon>
        <taxon>Bacillales</taxon>
        <taxon>Listeriaceae</taxon>
        <taxon>Listeria</taxon>
    </lineage>
</organism>
<sequence length="78" mass="9038">MAFRENVLEILEEITETDEVVQNTNIKLFDEGLLDSMATVQLLIEIEERLDITVPVSEFDRDEWATPEMIITQLEALK</sequence>
<comment type="function">
    <text evidence="1">Carrier protein involved in the D-alanylation of lipoteichoic acid (LTA). The loading of thioester-linked D-alanine onto DltC is catalyzed by D-alanine--D-alanyl carrier protein ligase DltA. The DltC-carried D-alanyl group is further transferred to cell membrane phosphatidylglycerol (PG) by forming an ester bond, probably catalyzed by DltD. D-alanylation of LTA plays an important role in modulating the properties of the cell wall in Gram-positive bacteria, influencing the net charge of the cell wall.</text>
</comment>
<comment type="pathway">
    <text evidence="1">Cell wall biogenesis; lipoteichoic acid biosynthesis.</text>
</comment>
<comment type="subcellular location">
    <subcellularLocation>
        <location evidence="1">Cytoplasm</location>
    </subcellularLocation>
</comment>
<comment type="PTM">
    <text evidence="1">4'-phosphopantetheine is transferred from CoA to a specific serine of apo-DCP.</text>
</comment>
<comment type="similarity">
    <text evidence="1">Belongs to the DltC family.</text>
</comment>
<evidence type="ECO:0000255" key="1">
    <source>
        <dbReference type="HAMAP-Rule" id="MF_00565"/>
    </source>
</evidence>